<feature type="chain" id="PRO_0000139783" description="Nitrogen regulatory protein P-II">
    <location>
        <begin position="1"/>
        <end position="112"/>
    </location>
</feature>
<feature type="modified residue" description="O-UMP-tyrosine" evidence="2">
    <location>
        <position position="51"/>
    </location>
</feature>
<proteinExistence type="inferred from homology"/>
<sequence length="112" mass="12200">MKKIEAIIKPFKLDEVKEALQEAGLQGITVTEAKGFGRQKGHTELYRGAEYVVDFLPKVKIEVVLGDDAVEGAIEAIRKAAQTGRIGDGKIFVSNIEEVVRIRTGETGMDAV</sequence>
<reference key="1">
    <citation type="journal article" date="2000" name="DNA Res.">
        <title>Complete genome structure of the nitrogen-fixing symbiotic bacterium Mesorhizobium loti.</title>
        <authorList>
            <person name="Kaneko T."/>
            <person name="Nakamura Y."/>
            <person name="Sato S."/>
            <person name="Asamizu E."/>
            <person name="Kato T."/>
            <person name="Sasamoto S."/>
            <person name="Watanabe A."/>
            <person name="Idesawa K."/>
            <person name="Ishikawa A."/>
            <person name="Kawashima K."/>
            <person name="Kimura T."/>
            <person name="Kishida Y."/>
            <person name="Kiyokawa C."/>
            <person name="Kohara M."/>
            <person name="Matsumoto M."/>
            <person name="Matsuno A."/>
            <person name="Mochizuki Y."/>
            <person name="Nakayama S."/>
            <person name="Nakazaki N."/>
            <person name="Shimpo S."/>
            <person name="Sugimoto M."/>
            <person name="Takeuchi C."/>
            <person name="Yamada M."/>
            <person name="Tabata S."/>
        </authorList>
    </citation>
    <scope>NUCLEOTIDE SEQUENCE [LARGE SCALE GENOMIC DNA]</scope>
    <source>
        <strain>LMG 29417 / CECT 9101 / MAFF 303099</strain>
    </source>
</reference>
<organism>
    <name type="scientific">Mesorhizobium japonicum (strain LMG 29417 / CECT 9101 / MAFF 303099)</name>
    <name type="common">Mesorhizobium loti (strain MAFF 303099)</name>
    <dbReference type="NCBI Taxonomy" id="266835"/>
    <lineage>
        <taxon>Bacteria</taxon>
        <taxon>Pseudomonadati</taxon>
        <taxon>Pseudomonadota</taxon>
        <taxon>Alphaproteobacteria</taxon>
        <taxon>Hyphomicrobiales</taxon>
        <taxon>Phyllobacteriaceae</taxon>
        <taxon>Mesorhizobium</taxon>
    </lineage>
</organism>
<protein>
    <recommendedName>
        <fullName>Nitrogen regulatory protein P-II</fullName>
    </recommendedName>
</protein>
<name>GLNB_RHILO</name>
<accession>Q98N18</accession>
<evidence type="ECO:0000250" key="1"/>
<evidence type="ECO:0000255" key="2">
    <source>
        <dbReference type="PROSITE-ProRule" id="PRU00675"/>
    </source>
</evidence>
<keyword id="KW-0535">Nitrogen fixation</keyword>
<keyword id="KW-0547">Nucleotide-binding</keyword>
<keyword id="KW-0597">Phosphoprotein</keyword>
<keyword id="KW-0804">Transcription</keyword>
<keyword id="KW-0805">Transcription regulation</keyword>
<comment type="function">
    <text evidence="1">In nitrogen-limiting conditions, when the ratio of Gln to 2-ketoglutarate decreases, P-II is uridylylated to P-II-UMP. P-II-UMP allows the deadenylation of glutamine synthetase (GS), thus activating the enzyme. Conversely, in nitrogen excess P-II is deuridylated and promotes the adenylation of GS. P-II indirectly controls the transcription of the GS gene (glnA). P-II prevents NR-II-catalyzed conversion of NR-I to NR-I-phosphate, the transcriptional activator of glnA. When P-II is uridylylated to P-II-UMP, these events are reversed (By similarity).</text>
</comment>
<comment type="subunit">
    <text evidence="1">Homotrimer.</text>
</comment>
<comment type="similarity">
    <text evidence="2">Belongs to the P(II) protein family.</text>
</comment>
<gene>
    <name type="primary">glnB</name>
    <name type="ordered locus">mll0345</name>
</gene>
<dbReference type="EMBL" id="BA000012">
    <property type="protein sequence ID" value="BAB47945.1"/>
    <property type="molecule type" value="Genomic_DNA"/>
</dbReference>
<dbReference type="RefSeq" id="WP_006205430.1">
    <property type="nucleotide sequence ID" value="NC_002678.2"/>
</dbReference>
<dbReference type="SMR" id="Q98N18"/>
<dbReference type="KEGG" id="mlo:mll0345"/>
<dbReference type="eggNOG" id="COG0347">
    <property type="taxonomic scope" value="Bacteria"/>
</dbReference>
<dbReference type="HOGENOM" id="CLU_082268_0_0_5"/>
<dbReference type="Proteomes" id="UP000000552">
    <property type="component" value="Chromosome"/>
</dbReference>
<dbReference type="GO" id="GO:0005829">
    <property type="term" value="C:cytosol"/>
    <property type="evidence" value="ECO:0007669"/>
    <property type="project" value="TreeGrafter"/>
</dbReference>
<dbReference type="GO" id="GO:0005524">
    <property type="term" value="F:ATP binding"/>
    <property type="evidence" value="ECO:0007669"/>
    <property type="project" value="TreeGrafter"/>
</dbReference>
<dbReference type="GO" id="GO:0030234">
    <property type="term" value="F:enzyme regulator activity"/>
    <property type="evidence" value="ECO:0007669"/>
    <property type="project" value="InterPro"/>
</dbReference>
<dbReference type="GO" id="GO:0009399">
    <property type="term" value="P:nitrogen fixation"/>
    <property type="evidence" value="ECO:0007669"/>
    <property type="project" value="UniProtKB-KW"/>
</dbReference>
<dbReference type="GO" id="GO:0006808">
    <property type="term" value="P:regulation of nitrogen utilization"/>
    <property type="evidence" value="ECO:0007669"/>
    <property type="project" value="InterPro"/>
</dbReference>
<dbReference type="FunFam" id="3.30.70.120:FF:000001">
    <property type="entry name" value="Nitrogen regulatory protein P-II"/>
    <property type="match status" value="1"/>
</dbReference>
<dbReference type="Gene3D" id="3.30.70.120">
    <property type="match status" value="1"/>
</dbReference>
<dbReference type="InterPro" id="IPR002187">
    <property type="entry name" value="N-reg_PII"/>
</dbReference>
<dbReference type="InterPro" id="IPR011322">
    <property type="entry name" value="N-reg_PII-like_a/b"/>
</dbReference>
<dbReference type="InterPro" id="IPR015867">
    <property type="entry name" value="N-reg_PII/ATP_PRibTrfase_C"/>
</dbReference>
<dbReference type="InterPro" id="IPR017918">
    <property type="entry name" value="N-reg_PII_CS"/>
</dbReference>
<dbReference type="InterPro" id="IPR002332">
    <property type="entry name" value="N-reg_PII_urydylation_site"/>
</dbReference>
<dbReference type="PANTHER" id="PTHR30115">
    <property type="entry name" value="NITROGEN REGULATORY PROTEIN P-II"/>
    <property type="match status" value="1"/>
</dbReference>
<dbReference type="PANTHER" id="PTHR30115:SF11">
    <property type="entry name" value="NITROGEN REGULATORY PROTEIN P-II HOMOLOG"/>
    <property type="match status" value="1"/>
</dbReference>
<dbReference type="Pfam" id="PF00543">
    <property type="entry name" value="P-II"/>
    <property type="match status" value="1"/>
</dbReference>
<dbReference type="PIRSF" id="PIRSF039144">
    <property type="entry name" value="GlnB"/>
    <property type="match status" value="1"/>
</dbReference>
<dbReference type="PRINTS" id="PR00340">
    <property type="entry name" value="PIIGLNB"/>
</dbReference>
<dbReference type="SMART" id="SM00938">
    <property type="entry name" value="P-II"/>
    <property type="match status" value="1"/>
</dbReference>
<dbReference type="SUPFAM" id="SSF54913">
    <property type="entry name" value="GlnB-like"/>
    <property type="match status" value="1"/>
</dbReference>
<dbReference type="PROSITE" id="PS00638">
    <property type="entry name" value="PII_GLNB_CTER"/>
    <property type="match status" value="1"/>
</dbReference>
<dbReference type="PROSITE" id="PS51343">
    <property type="entry name" value="PII_GLNB_DOM"/>
    <property type="match status" value="1"/>
</dbReference>
<dbReference type="PROSITE" id="PS00496">
    <property type="entry name" value="PII_GLNB_UMP"/>
    <property type="match status" value="1"/>
</dbReference>